<keyword id="KW-0007">Acetylation</keyword>
<keyword id="KW-0963">Cytoplasm</keyword>
<keyword id="KW-0539">Nucleus</keyword>
<keyword id="KW-0597">Phosphoprotein</keyword>
<keyword id="KW-1185">Reference proteome</keyword>
<accession>B0BN72</accession>
<organism>
    <name type="scientific">Rattus norvegicus</name>
    <name type="common">Rat</name>
    <dbReference type="NCBI Taxonomy" id="10116"/>
    <lineage>
        <taxon>Eukaryota</taxon>
        <taxon>Metazoa</taxon>
        <taxon>Chordata</taxon>
        <taxon>Craniata</taxon>
        <taxon>Vertebrata</taxon>
        <taxon>Euteleostomi</taxon>
        <taxon>Mammalia</taxon>
        <taxon>Eutheria</taxon>
        <taxon>Euarchontoglires</taxon>
        <taxon>Glires</taxon>
        <taxon>Rodentia</taxon>
        <taxon>Myomorpha</taxon>
        <taxon>Muroidea</taxon>
        <taxon>Muridae</taxon>
        <taxon>Murinae</taxon>
        <taxon>Rattus</taxon>
    </lineage>
</organism>
<proteinExistence type="evidence at protein level"/>
<protein>
    <recommendedName>
        <fullName>Mapk-regulated corepressor-interacting protein 1</fullName>
    </recommendedName>
    <alternativeName>
        <fullName>Protein FAM195B</fullName>
    </alternativeName>
</protein>
<gene>
    <name type="primary">Mcrip1</name>
    <name type="synonym">Fam195b</name>
</gene>
<comment type="function">
    <text evidence="1">The phosphorylation status of MCRIP1 functions as a molecular switch to regulate epithelial-mesenchymal transition. Unphosphorylated MCRIP1 binds to and inhibits the transcriptional corepressor CTBP(s). When phosphorylated by MAPK/ERK, MCRIP1 releases CTBP(s) resulting in transcriptional silencing of the E-cadherin gene and induction of epithelial-mesenchymal transition.</text>
</comment>
<comment type="subunit">
    <text evidence="1">Interacts (unphosphorylated form, via the PXDLS motif) with CTBP1, competitively inhibiting CTBP-ZEB1 interaction. Interacts with CTBP2. Interacts with MCRIP2. Interacts with DDX6.</text>
</comment>
<comment type="subcellular location">
    <subcellularLocation>
        <location evidence="1">Nucleus</location>
    </subcellularLocation>
    <subcellularLocation>
        <location evidence="1">Cytoplasm</location>
        <location evidence="1">Stress granule</location>
    </subcellularLocation>
</comment>
<comment type="PTM">
    <text evidence="1">Phosphorylation by MAPK3/1 (ERK1/2) regulates MCRIP1 binding to CTBP(s).</text>
</comment>
<comment type="similarity">
    <text evidence="4">Belongs to the MCRIP family.</text>
</comment>
<dbReference type="EMBL" id="CH473948">
    <property type="protein sequence ID" value="EDM06851.1"/>
    <property type="molecule type" value="Genomic_DNA"/>
</dbReference>
<dbReference type="EMBL" id="BC158709">
    <property type="protein sequence ID" value="AAI58710.1"/>
    <property type="molecule type" value="mRNA"/>
</dbReference>
<dbReference type="RefSeq" id="NP_001101781.1">
    <property type="nucleotide sequence ID" value="NM_001108311.1"/>
</dbReference>
<dbReference type="RefSeq" id="XP_006247958.1">
    <property type="nucleotide sequence ID" value="XM_006247896.5"/>
</dbReference>
<dbReference type="RefSeq" id="XP_017452903.1">
    <property type="nucleotide sequence ID" value="XM_017597414.3"/>
</dbReference>
<dbReference type="RefSeq" id="XP_038942371.1">
    <property type="nucleotide sequence ID" value="XM_039086443.2"/>
</dbReference>
<dbReference type="RefSeq" id="XP_063125550.1">
    <property type="nucleotide sequence ID" value="XM_063269480.1"/>
</dbReference>
<dbReference type="SMR" id="B0BN72"/>
<dbReference type="FunCoup" id="B0BN72">
    <property type="interactions" value="636"/>
</dbReference>
<dbReference type="STRING" id="10116.ENSRNOP00000051843"/>
<dbReference type="iPTMnet" id="B0BN72"/>
<dbReference type="PhosphoSitePlus" id="B0BN72"/>
<dbReference type="jPOST" id="B0BN72"/>
<dbReference type="PaxDb" id="10116-ENSRNOP00000051843"/>
<dbReference type="PeptideAtlas" id="B0BN72"/>
<dbReference type="GeneID" id="360677"/>
<dbReference type="KEGG" id="rno:360677"/>
<dbReference type="AGR" id="RGD:1311925"/>
<dbReference type="CTD" id="348262"/>
<dbReference type="RGD" id="1311925">
    <property type="gene designation" value="Mcrip1"/>
</dbReference>
<dbReference type="VEuPathDB" id="HostDB:ENSRNOG00000036691"/>
<dbReference type="eggNOG" id="ENOG502S25D">
    <property type="taxonomic scope" value="Eukaryota"/>
</dbReference>
<dbReference type="HOGENOM" id="CLU_161057_0_0_1"/>
<dbReference type="InParanoid" id="B0BN72"/>
<dbReference type="OrthoDB" id="54833at9989"/>
<dbReference type="PhylomeDB" id="B0BN72"/>
<dbReference type="TreeFam" id="TF326620"/>
<dbReference type="PRO" id="PR:B0BN72"/>
<dbReference type="Proteomes" id="UP000002494">
    <property type="component" value="Chromosome 10"/>
</dbReference>
<dbReference type="Proteomes" id="UP000234681">
    <property type="component" value="Chromosome 10"/>
</dbReference>
<dbReference type="Bgee" id="ENSRNOG00000036691">
    <property type="expression patterns" value="Expressed in heart and 18 other cell types or tissues"/>
</dbReference>
<dbReference type="GO" id="GO:0005737">
    <property type="term" value="C:cytoplasm"/>
    <property type="evidence" value="ECO:0000250"/>
    <property type="project" value="UniProtKB"/>
</dbReference>
<dbReference type="GO" id="GO:0010494">
    <property type="term" value="C:cytoplasmic stress granule"/>
    <property type="evidence" value="ECO:0000250"/>
    <property type="project" value="UniProtKB"/>
</dbReference>
<dbReference type="GO" id="GO:0005634">
    <property type="term" value="C:nucleus"/>
    <property type="evidence" value="ECO:0000250"/>
    <property type="project" value="UniProtKB"/>
</dbReference>
<dbReference type="GO" id="GO:0010717">
    <property type="term" value="P:regulation of epithelial to mesenchymal transition"/>
    <property type="evidence" value="ECO:0000250"/>
    <property type="project" value="UniProtKB"/>
</dbReference>
<dbReference type="InterPro" id="IPR029428">
    <property type="entry name" value="MCRIP"/>
</dbReference>
<dbReference type="Pfam" id="PF14799">
    <property type="entry name" value="FAM195"/>
    <property type="match status" value="1"/>
</dbReference>
<reference key="1">
    <citation type="submission" date="2005-07" db="EMBL/GenBank/DDBJ databases">
        <authorList>
            <person name="Mural R.J."/>
            <person name="Adams M.D."/>
            <person name="Myers E.W."/>
            <person name="Smith H.O."/>
            <person name="Venter J.C."/>
        </authorList>
    </citation>
    <scope>NUCLEOTIDE SEQUENCE [LARGE SCALE GENOMIC DNA]</scope>
</reference>
<reference key="2">
    <citation type="journal article" date="2004" name="Genome Res.">
        <title>The status, quality, and expansion of the NIH full-length cDNA project: the Mammalian Gene Collection (MGC).</title>
        <authorList>
            <consortium name="The MGC Project Team"/>
        </authorList>
    </citation>
    <scope>NUCLEOTIDE SEQUENCE [LARGE SCALE MRNA]</scope>
    <source>
        <tissue>Heart</tissue>
    </source>
</reference>
<reference key="3">
    <citation type="journal article" date="2012" name="Nat. Commun.">
        <title>Quantitative maps of protein phosphorylation sites across 14 different rat organs and tissues.</title>
        <authorList>
            <person name="Lundby A."/>
            <person name="Secher A."/>
            <person name="Lage K."/>
            <person name="Nordsborg N.B."/>
            <person name="Dmytriyev A."/>
            <person name="Lundby C."/>
            <person name="Olsen J.V."/>
        </authorList>
    </citation>
    <scope>PHOSPHORYLATION [LARGE SCALE ANALYSIS] AT SER-21</scope>
    <scope>IDENTIFICATION BY MASS SPECTROMETRY [LARGE SCALE ANALYSIS]</scope>
</reference>
<evidence type="ECO:0000250" key="1">
    <source>
        <dbReference type="UniProtKB" id="C9JLW8"/>
    </source>
</evidence>
<evidence type="ECO:0000250" key="2">
    <source>
        <dbReference type="UniProtKB" id="Q3UGS4"/>
    </source>
</evidence>
<evidence type="ECO:0000256" key="3">
    <source>
        <dbReference type="SAM" id="MobiDB-lite"/>
    </source>
</evidence>
<evidence type="ECO:0000305" key="4"/>
<evidence type="ECO:0007744" key="5">
    <source>
    </source>
</evidence>
<feature type="chain" id="PRO_0000393956" description="Mapk-regulated corepressor-interacting protein 1">
    <location>
        <begin position="1"/>
        <end position="97"/>
    </location>
</feature>
<feature type="region of interest" description="Disordered" evidence="3">
    <location>
        <begin position="1"/>
        <end position="29"/>
    </location>
</feature>
<feature type="short sequence motif" description="PXDLS motif" evidence="4">
    <location>
        <begin position="80"/>
        <end position="84"/>
    </location>
</feature>
<feature type="compositionally biased region" description="Low complexity" evidence="3">
    <location>
        <begin position="15"/>
        <end position="26"/>
    </location>
</feature>
<feature type="modified residue" description="Phosphoserine" evidence="5">
    <location>
        <position position="21"/>
    </location>
</feature>
<feature type="modified residue" description="Phosphothreonine" evidence="1">
    <location>
        <position position="30"/>
    </location>
</feature>
<feature type="modified residue" description="Phosphotyrosine" evidence="2">
    <location>
        <position position="41"/>
    </location>
</feature>
<feature type="modified residue" description="N6-acetyllysine" evidence="1">
    <location>
        <position position="79"/>
    </location>
</feature>
<sequence length="97" mass="11101">MTSSPVSRVVYNGKRNSSPRSPTNSSEIFTPAHEENVRFIYEAWQGVERDLRSQLSSGERCLVEEYVEKVPNPSLKTFKPIDLSDLKRRNTQDAKKS</sequence>
<name>MCRI1_RAT</name>